<comment type="function">
    <text evidence="1">Synthesizes alpha-1,4-glucan chains using ADP-glucose.</text>
</comment>
<comment type="catalytic activity">
    <reaction evidence="1">
        <text>[(1-&gt;4)-alpha-D-glucosyl](n) + ADP-alpha-D-glucose = [(1-&gt;4)-alpha-D-glucosyl](n+1) + ADP + H(+)</text>
        <dbReference type="Rhea" id="RHEA:18189"/>
        <dbReference type="Rhea" id="RHEA-COMP:9584"/>
        <dbReference type="Rhea" id="RHEA-COMP:9587"/>
        <dbReference type="ChEBI" id="CHEBI:15378"/>
        <dbReference type="ChEBI" id="CHEBI:15444"/>
        <dbReference type="ChEBI" id="CHEBI:57498"/>
        <dbReference type="ChEBI" id="CHEBI:456216"/>
        <dbReference type="EC" id="2.4.1.21"/>
    </reaction>
</comment>
<comment type="pathway">
    <text evidence="1">Glycan biosynthesis; glycogen biosynthesis.</text>
</comment>
<comment type="similarity">
    <text evidence="1">Belongs to the glycosyltransferase 1 family. Bacterial/plant glycogen synthase subfamily.</text>
</comment>
<organism>
    <name type="scientific">Cellvibrio japonicus (strain Ueda107)</name>
    <name type="common">Pseudomonas fluorescens subsp. cellulosa</name>
    <dbReference type="NCBI Taxonomy" id="498211"/>
    <lineage>
        <taxon>Bacteria</taxon>
        <taxon>Pseudomonadati</taxon>
        <taxon>Pseudomonadota</taxon>
        <taxon>Gammaproteobacteria</taxon>
        <taxon>Cellvibrionales</taxon>
        <taxon>Cellvibrionaceae</taxon>
        <taxon>Cellvibrio</taxon>
    </lineage>
</organism>
<protein>
    <recommendedName>
        <fullName evidence="1">Glycogen synthase</fullName>
        <ecNumber evidence="1">2.4.1.21</ecNumber>
    </recommendedName>
    <alternativeName>
        <fullName evidence="1">Starch [bacterial glycogen] synthase</fullName>
    </alternativeName>
</protein>
<gene>
    <name evidence="1" type="primary">glgA</name>
    <name type="ordered locus">CJA_1886</name>
</gene>
<keyword id="KW-0320">Glycogen biosynthesis</keyword>
<keyword id="KW-0328">Glycosyltransferase</keyword>
<keyword id="KW-1185">Reference proteome</keyword>
<keyword id="KW-0808">Transferase</keyword>
<dbReference type="EC" id="2.4.1.21" evidence="1"/>
<dbReference type="EMBL" id="CP000934">
    <property type="protein sequence ID" value="ACE84974.1"/>
    <property type="molecule type" value="Genomic_DNA"/>
</dbReference>
<dbReference type="RefSeq" id="WP_012487503.1">
    <property type="nucleotide sequence ID" value="NC_010995.1"/>
</dbReference>
<dbReference type="SMR" id="B3PGN5"/>
<dbReference type="STRING" id="498211.CJA_1886"/>
<dbReference type="CAZy" id="GT5">
    <property type="family name" value="Glycosyltransferase Family 5"/>
</dbReference>
<dbReference type="KEGG" id="cja:CJA_1886"/>
<dbReference type="eggNOG" id="COG0297">
    <property type="taxonomic scope" value="Bacteria"/>
</dbReference>
<dbReference type="HOGENOM" id="CLU_009583_18_2_6"/>
<dbReference type="OrthoDB" id="9808590at2"/>
<dbReference type="UniPathway" id="UPA00164"/>
<dbReference type="Proteomes" id="UP000001036">
    <property type="component" value="Chromosome"/>
</dbReference>
<dbReference type="GO" id="GO:0005829">
    <property type="term" value="C:cytosol"/>
    <property type="evidence" value="ECO:0007669"/>
    <property type="project" value="TreeGrafter"/>
</dbReference>
<dbReference type="GO" id="GO:0009011">
    <property type="term" value="F:alpha-1,4-glucan glucosyltransferase (ADP-glucose donor) activity"/>
    <property type="evidence" value="ECO:0007669"/>
    <property type="project" value="UniProtKB-UniRule"/>
</dbReference>
<dbReference type="GO" id="GO:0004373">
    <property type="term" value="F:alpha-1,4-glucan glucosyltransferase (UDP-glucose donor) activity"/>
    <property type="evidence" value="ECO:0007669"/>
    <property type="project" value="InterPro"/>
</dbReference>
<dbReference type="GO" id="GO:0005978">
    <property type="term" value="P:glycogen biosynthetic process"/>
    <property type="evidence" value="ECO:0007669"/>
    <property type="project" value="UniProtKB-UniRule"/>
</dbReference>
<dbReference type="CDD" id="cd03791">
    <property type="entry name" value="GT5_Glycogen_synthase_DULL1-like"/>
    <property type="match status" value="1"/>
</dbReference>
<dbReference type="Gene3D" id="3.40.50.2000">
    <property type="entry name" value="Glycogen Phosphorylase B"/>
    <property type="match status" value="2"/>
</dbReference>
<dbReference type="HAMAP" id="MF_00484">
    <property type="entry name" value="Glycogen_synth"/>
    <property type="match status" value="1"/>
</dbReference>
<dbReference type="InterPro" id="IPR001296">
    <property type="entry name" value="Glyco_trans_1"/>
</dbReference>
<dbReference type="InterPro" id="IPR011835">
    <property type="entry name" value="GS/SS"/>
</dbReference>
<dbReference type="InterPro" id="IPR013534">
    <property type="entry name" value="Starch_synth_cat_dom"/>
</dbReference>
<dbReference type="NCBIfam" id="TIGR02095">
    <property type="entry name" value="glgA"/>
    <property type="match status" value="1"/>
</dbReference>
<dbReference type="NCBIfam" id="NF001899">
    <property type="entry name" value="PRK00654.1-2"/>
    <property type="match status" value="1"/>
</dbReference>
<dbReference type="PANTHER" id="PTHR45825:SF11">
    <property type="entry name" value="ALPHA AMYLASE DOMAIN-CONTAINING PROTEIN"/>
    <property type="match status" value="1"/>
</dbReference>
<dbReference type="PANTHER" id="PTHR45825">
    <property type="entry name" value="GRANULE-BOUND STARCH SYNTHASE 1, CHLOROPLASTIC/AMYLOPLASTIC"/>
    <property type="match status" value="1"/>
</dbReference>
<dbReference type="Pfam" id="PF08323">
    <property type="entry name" value="Glyco_transf_5"/>
    <property type="match status" value="1"/>
</dbReference>
<dbReference type="Pfam" id="PF00534">
    <property type="entry name" value="Glycos_transf_1"/>
    <property type="match status" value="1"/>
</dbReference>
<dbReference type="SUPFAM" id="SSF53756">
    <property type="entry name" value="UDP-Glycosyltransferase/glycogen phosphorylase"/>
    <property type="match status" value="1"/>
</dbReference>
<feature type="chain" id="PRO_1000206424" description="Glycogen synthase">
    <location>
        <begin position="1"/>
        <end position="481"/>
    </location>
</feature>
<feature type="binding site" evidence="1">
    <location>
        <position position="16"/>
    </location>
    <ligand>
        <name>ADP-alpha-D-glucose</name>
        <dbReference type="ChEBI" id="CHEBI:57498"/>
    </ligand>
</feature>
<reference key="1">
    <citation type="journal article" date="2008" name="J. Bacteriol.">
        <title>Insights into plant cell wall degradation from the genome sequence of the soil bacterium Cellvibrio japonicus.</title>
        <authorList>
            <person name="DeBoy R.T."/>
            <person name="Mongodin E.F."/>
            <person name="Fouts D.E."/>
            <person name="Tailford L.E."/>
            <person name="Khouri H."/>
            <person name="Emerson J.B."/>
            <person name="Mohamoud Y."/>
            <person name="Watkins K."/>
            <person name="Henrissat B."/>
            <person name="Gilbert H.J."/>
            <person name="Nelson K.E."/>
        </authorList>
    </citation>
    <scope>NUCLEOTIDE SEQUENCE [LARGE SCALE GENOMIC DNA]</scope>
    <source>
        <strain>Ueda107</strain>
    </source>
</reference>
<sequence>MHSILFATSEAYPLIKTGGLADVAASLPRALLKLGHDVRILLPAYESLLAKAASQGLKTLGEISLDDINLTLHQTRLPGTRVTVWLVDIPEFSARAGNPYCGADGNDWYDNHLRFYWFARAAEAIALNQAGLNWQPDIVHCNDWQTGLIPALLSLHPERPATLFTIHNLAYRGLFSYQAFGELNLPPAFWHHERLEFYGQMSFMKGGLAFADFITTVSPSYAQEIQLPEHGYGLDGLIRYRQESLSGILNGIDTDEWNPGKDKHLAATYNRRTLGNKTKNKLALQETLGLALNADVPLLGFIGRLVDQKGIDLILNQLPLLLEQDCQLVVLGSGFPHYEQRLREVARQYPDRVSVTIGYDEGLAHQIEAGCDIFLMPSIFEPCGLNQMYSLRYGTLPVVHAVGGLKDTVQERPLDNPGEDANGFVFHSPDALDLHAAILRALDAYRQPATWKQLQINAMNRDSSWEQSAKAYEAIYANLCS</sequence>
<accession>B3PGN5</accession>
<proteinExistence type="inferred from homology"/>
<name>GLGA_CELJU</name>
<evidence type="ECO:0000255" key="1">
    <source>
        <dbReference type="HAMAP-Rule" id="MF_00484"/>
    </source>
</evidence>